<keyword id="KW-0028">Amino-acid biosynthesis</keyword>
<keyword id="KW-0963">Cytoplasm</keyword>
<keyword id="KW-0413">Isomerase</keyword>
<keyword id="KW-0486">Methionine biosynthesis</keyword>
<keyword id="KW-0539">Nucleus</keyword>
<keyword id="KW-1185">Reference proteome</keyword>
<organism>
    <name type="scientific">Fusarium vanettenii (strain ATCC MYA-4622 / CBS 123669 / FGSC 9596 / NRRL 45880 / 77-13-4)</name>
    <name type="common">Fusarium solani subsp. pisi</name>
    <dbReference type="NCBI Taxonomy" id="660122"/>
    <lineage>
        <taxon>Eukaryota</taxon>
        <taxon>Fungi</taxon>
        <taxon>Dikarya</taxon>
        <taxon>Ascomycota</taxon>
        <taxon>Pezizomycotina</taxon>
        <taxon>Sordariomycetes</taxon>
        <taxon>Hypocreomycetidae</taxon>
        <taxon>Hypocreales</taxon>
        <taxon>Nectriaceae</taxon>
        <taxon>Fusarium</taxon>
        <taxon>Fusarium solani species complex</taxon>
        <taxon>Fusarium vanettenii</taxon>
    </lineage>
</organism>
<gene>
    <name evidence="1" type="primary">MRI1</name>
    <name type="ORF">NECHADRAFT_57836</name>
</gene>
<protein>
    <recommendedName>
        <fullName evidence="1">Methylthioribose-1-phosphate isomerase</fullName>
        <shortName evidence="1">M1Pi</shortName>
        <shortName evidence="1">MTR-1-P isomerase</shortName>
        <ecNumber evidence="1">5.3.1.23</ecNumber>
    </recommendedName>
    <alternativeName>
        <fullName evidence="1">S-methyl-5-thioribose-1-phosphate isomerase</fullName>
    </alternativeName>
    <alternativeName>
        <fullName evidence="1">Translation initiation factor eIF-2B subunit alpha/beta/delta-like protein</fullName>
    </alternativeName>
</protein>
<dbReference type="EC" id="5.3.1.23" evidence="1"/>
<dbReference type="EMBL" id="GG698910">
    <property type="protein sequence ID" value="EEU40061.1"/>
    <property type="molecule type" value="Genomic_DNA"/>
</dbReference>
<dbReference type="RefSeq" id="XP_003045774.1">
    <property type="nucleotide sequence ID" value="XM_003045728.1"/>
</dbReference>
<dbReference type="SMR" id="C7Z638"/>
<dbReference type="FunCoup" id="C7Z638">
    <property type="interactions" value="749"/>
</dbReference>
<dbReference type="STRING" id="660122.C7Z638"/>
<dbReference type="EnsemblFungi" id="NechaT57836">
    <property type="protein sequence ID" value="NechaP57836"/>
    <property type="gene ID" value="NechaG57836"/>
</dbReference>
<dbReference type="GeneID" id="9678447"/>
<dbReference type="KEGG" id="nhe:NECHADRAFT_57836"/>
<dbReference type="VEuPathDB" id="FungiDB:NECHADRAFT_57836"/>
<dbReference type="eggNOG" id="KOG1468">
    <property type="taxonomic scope" value="Eukaryota"/>
</dbReference>
<dbReference type="HOGENOM" id="CLU_016218_1_3_1"/>
<dbReference type="InParanoid" id="C7Z638"/>
<dbReference type="OMA" id="CETRPLN"/>
<dbReference type="OrthoDB" id="2461at2759"/>
<dbReference type="UniPathway" id="UPA00904">
    <property type="reaction ID" value="UER00874"/>
</dbReference>
<dbReference type="Proteomes" id="UP000005206">
    <property type="component" value="Unassembled WGS sequence"/>
</dbReference>
<dbReference type="GO" id="GO:0005737">
    <property type="term" value="C:cytoplasm"/>
    <property type="evidence" value="ECO:0007669"/>
    <property type="project" value="UniProtKB-SubCell"/>
</dbReference>
<dbReference type="GO" id="GO:0005634">
    <property type="term" value="C:nucleus"/>
    <property type="evidence" value="ECO:0007669"/>
    <property type="project" value="UniProtKB-SubCell"/>
</dbReference>
<dbReference type="GO" id="GO:0046523">
    <property type="term" value="F:S-methyl-5-thioribose-1-phosphate isomerase activity"/>
    <property type="evidence" value="ECO:0007669"/>
    <property type="project" value="UniProtKB-UniRule"/>
</dbReference>
<dbReference type="GO" id="GO:0019509">
    <property type="term" value="P:L-methionine salvage from methylthioadenosine"/>
    <property type="evidence" value="ECO:0007669"/>
    <property type="project" value="UniProtKB-UniRule"/>
</dbReference>
<dbReference type="FunFam" id="1.20.120.420:FF:000003">
    <property type="entry name" value="Methylthioribose-1-phosphate isomerase"/>
    <property type="match status" value="1"/>
</dbReference>
<dbReference type="FunFam" id="3.40.50.10470:FF:000003">
    <property type="entry name" value="Methylthioribose-1-phosphate isomerase"/>
    <property type="match status" value="1"/>
</dbReference>
<dbReference type="Gene3D" id="1.20.120.420">
    <property type="entry name" value="translation initiation factor eif-2b, domain 1"/>
    <property type="match status" value="1"/>
</dbReference>
<dbReference type="Gene3D" id="3.40.50.10470">
    <property type="entry name" value="Translation initiation factor eif-2b, domain 2"/>
    <property type="match status" value="1"/>
</dbReference>
<dbReference type="HAMAP" id="MF_01678">
    <property type="entry name" value="Salvage_MtnA"/>
    <property type="match status" value="1"/>
</dbReference>
<dbReference type="InterPro" id="IPR000649">
    <property type="entry name" value="IF-2B-related"/>
</dbReference>
<dbReference type="InterPro" id="IPR005251">
    <property type="entry name" value="IF-M1Pi"/>
</dbReference>
<dbReference type="InterPro" id="IPR042529">
    <property type="entry name" value="IF_2B-like_C"/>
</dbReference>
<dbReference type="InterPro" id="IPR011559">
    <property type="entry name" value="Initiation_fac_2B_a/b/d"/>
</dbReference>
<dbReference type="InterPro" id="IPR027363">
    <property type="entry name" value="M1Pi_N"/>
</dbReference>
<dbReference type="InterPro" id="IPR037171">
    <property type="entry name" value="NagB/RpiA_transferase-like"/>
</dbReference>
<dbReference type="NCBIfam" id="TIGR00524">
    <property type="entry name" value="eIF-2B_rel"/>
    <property type="match status" value="1"/>
</dbReference>
<dbReference type="NCBIfam" id="NF004326">
    <property type="entry name" value="PRK05720.1"/>
    <property type="match status" value="1"/>
</dbReference>
<dbReference type="NCBIfam" id="TIGR00512">
    <property type="entry name" value="salvage_mtnA"/>
    <property type="match status" value="1"/>
</dbReference>
<dbReference type="PANTHER" id="PTHR43475">
    <property type="entry name" value="METHYLTHIORIBOSE-1-PHOSPHATE ISOMERASE"/>
    <property type="match status" value="1"/>
</dbReference>
<dbReference type="PANTHER" id="PTHR43475:SF1">
    <property type="entry name" value="METHYLTHIORIBOSE-1-PHOSPHATE ISOMERASE"/>
    <property type="match status" value="1"/>
</dbReference>
<dbReference type="Pfam" id="PF01008">
    <property type="entry name" value="IF-2B"/>
    <property type="match status" value="1"/>
</dbReference>
<dbReference type="SUPFAM" id="SSF100950">
    <property type="entry name" value="NagB/RpiA/CoA transferase-like"/>
    <property type="match status" value="1"/>
</dbReference>
<comment type="function">
    <text evidence="1">Catalyzes the interconversion of methylthioribose-1-phosphate (MTR-1-P) into methylthioribulose-1-phosphate (MTRu-1-P).</text>
</comment>
<comment type="catalytic activity">
    <reaction evidence="1">
        <text>5-(methylsulfanyl)-alpha-D-ribose 1-phosphate = 5-(methylsulfanyl)-D-ribulose 1-phosphate</text>
        <dbReference type="Rhea" id="RHEA:19989"/>
        <dbReference type="ChEBI" id="CHEBI:58533"/>
        <dbReference type="ChEBI" id="CHEBI:58548"/>
        <dbReference type="EC" id="5.3.1.23"/>
    </reaction>
</comment>
<comment type="pathway">
    <text evidence="1">Amino-acid biosynthesis; L-methionine biosynthesis via salvage pathway; L-methionine from S-methyl-5-thio-alpha-D-ribose 1-phosphate: step 1/6.</text>
</comment>
<comment type="subcellular location">
    <subcellularLocation>
        <location evidence="1">Cytoplasm</location>
    </subcellularLocation>
    <subcellularLocation>
        <location evidence="1">Nucleus</location>
    </subcellularLocation>
</comment>
<comment type="similarity">
    <text evidence="1">Belongs to the eIF-2B alpha/beta/delta subunits family. MtnA subfamily.</text>
</comment>
<evidence type="ECO:0000255" key="1">
    <source>
        <dbReference type="HAMAP-Rule" id="MF_03119"/>
    </source>
</evidence>
<name>MTNA_FUSV7</name>
<sequence>MSTLQAVKYIRGKLEVLDQLRLPHEFHYDEVSNRTEAFDSIYTMRVRGAPAIAIVAALGLAVELHNGSCTASSAEETIGQIEEALDYLKESRPTAVDLTNAINQLKARIREVGSTATKEAIISAFIEEAEKIFEKDLKTNLSIGDFGAEWLRAQVGASPEQQISVLTHCNTGSLATSGHGTALGIIRTLQAKKLLHHAFCTETRPYNQGSRLTAFELVFEGIPSTLITDSMAASLFRTRKQEKNIAAVIVGADRVVRNGDTANKIGTYQLAVLAKHHGVKFIVAAPTTSIDLETETGDGIKIEERKKEELTQVTGAVIKPDGTVDESSKVRVATADQRINVWNPAFDVTPAEFIDAVVTEKGAIEKGPDGKFDFSQILPERWAKITGA</sequence>
<accession>C7Z638</accession>
<feature type="chain" id="PRO_0000402034" description="Methylthioribose-1-phosphate isomerase">
    <location>
        <begin position="1"/>
        <end position="388"/>
    </location>
</feature>
<feature type="active site" description="Proton donor" evidence="1">
    <location>
        <position position="253"/>
    </location>
</feature>
<feature type="site" description="Transition state stabilizer" evidence="1">
    <location>
        <position position="169"/>
    </location>
</feature>
<reference key="1">
    <citation type="journal article" date="2009" name="PLoS Genet.">
        <title>The genome of Nectria haematococca: contribution of supernumerary chromosomes to gene expansion.</title>
        <authorList>
            <person name="Coleman J.J."/>
            <person name="Rounsley S.D."/>
            <person name="Rodriguez-Carres M."/>
            <person name="Kuo A."/>
            <person name="Wasmann C.C."/>
            <person name="Grimwood J."/>
            <person name="Schmutz J."/>
            <person name="Taga M."/>
            <person name="White G.J."/>
            <person name="Zhou S."/>
            <person name="Schwartz D.C."/>
            <person name="Freitag M."/>
            <person name="Ma L.-J."/>
            <person name="Danchin E.G.J."/>
            <person name="Henrissat B."/>
            <person name="Coutinho P.M."/>
            <person name="Nelson D.R."/>
            <person name="Straney D."/>
            <person name="Napoli C.A."/>
            <person name="Barker B.M."/>
            <person name="Gribskov M."/>
            <person name="Rep M."/>
            <person name="Kroken S."/>
            <person name="Molnar I."/>
            <person name="Rensing C."/>
            <person name="Kennell J.C."/>
            <person name="Zamora J."/>
            <person name="Farman M.L."/>
            <person name="Selker E.U."/>
            <person name="Salamov A."/>
            <person name="Shapiro H."/>
            <person name="Pangilinan J."/>
            <person name="Lindquist E."/>
            <person name="Lamers C."/>
            <person name="Grigoriev I.V."/>
            <person name="Geiser D.M."/>
            <person name="Covert S.F."/>
            <person name="Temporini E."/>
            <person name="VanEtten H.D."/>
        </authorList>
    </citation>
    <scope>NUCLEOTIDE SEQUENCE [LARGE SCALE GENOMIC DNA]</scope>
    <source>
        <strain>ATCC MYA-4622 / CBS 123669 / FGSC 9596 / NRRL 45880 / 77-13-4</strain>
    </source>
</reference>
<proteinExistence type="inferred from homology"/>